<dbReference type="EMBL" id="AF229451">
    <property type="protein sequence ID" value="AAL08216.1"/>
    <property type="molecule type" value="mRNA"/>
</dbReference>
<dbReference type="SMR" id="Q90Y54"/>
<dbReference type="FunCoup" id="Q90Y54">
    <property type="interactions" value="556"/>
</dbReference>
<dbReference type="STRING" id="7955.ENSDARP00000008197"/>
<dbReference type="GlyCosmos" id="Q90Y54">
    <property type="glycosylation" value="7 sites, No reported glycans"/>
</dbReference>
<dbReference type="PaxDb" id="7955-ENSDARP00000008197"/>
<dbReference type="AGR" id="ZFIN:ZDB-GENE-011128-4"/>
<dbReference type="ZFIN" id="ZDB-GENE-011128-4">
    <property type="gene designation" value="jag1b"/>
</dbReference>
<dbReference type="eggNOG" id="KOG1217">
    <property type="taxonomic scope" value="Eukaryota"/>
</dbReference>
<dbReference type="InParanoid" id="Q90Y54"/>
<dbReference type="PhylomeDB" id="Q90Y54"/>
<dbReference type="Reactome" id="R-DRE-2979096">
    <property type="pathway name" value="NOTCH2 Activation and Transmission of Signal to the Nucleus"/>
</dbReference>
<dbReference type="SignaLink" id="Q90Y54"/>
<dbReference type="PRO" id="PR:Q90Y54"/>
<dbReference type="Proteomes" id="UP000000437">
    <property type="component" value="Unplaced"/>
</dbReference>
<dbReference type="GO" id="GO:0016020">
    <property type="term" value="C:membrane"/>
    <property type="evidence" value="ECO:0000303"/>
    <property type="project" value="ZFIN"/>
</dbReference>
<dbReference type="GO" id="GO:0005886">
    <property type="term" value="C:plasma membrane"/>
    <property type="evidence" value="ECO:0007669"/>
    <property type="project" value="UniProtKB-SubCell"/>
</dbReference>
<dbReference type="GO" id="GO:0005509">
    <property type="term" value="F:calcium ion binding"/>
    <property type="evidence" value="ECO:0007669"/>
    <property type="project" value="InterPro"/>
</dbReference>
<dbReference type="GO" id="GO:0005112">
    <property type="term" value="F:Notch binding"/>
    <property type="evidence" value="ECO:0000318"/>
    <property type="project" value="GO_Central"/>
</dbReference>
<dbReference type="GO" id="GO:0060117">
    <property type="term" value="P:auditory receptor cell development"/>
    <property type="evidence" value="ECO:0000315"/>
    <property type="project" value="ZFIN"/>
</dbReference>
<dbReference type="GO" id="GO:0060351">
    <property type="term" value="P:cartilage development involved in endochondral bone morphogenesis"/>
    <property type="evidence" value="ECO:0000315"/>
    <property type="project" value="ZFIN"/>
</dbReference>
<dbReference type="GO" id="GO:1904888">
    <property type="term" value="P:cranial skeletal system development"/>
    <property type="evidence" value="ECO:0000315"/>
    <property type="project" value="ZFIN"/>
</dbReference>
<dbReference type="GO" id="GO:0009953">
    <property type="term" value="P:dorsal/ventral pattern formation"/>
    <property type="evidence" value="ECO:0000315"/>
    <property type="project" value="ZFIN"/>
</dbReference>
<dbReference type="GO" id="GO:0009913">
    <property type="term" value="P:epidermal cell differentiation"/>
    <property type="evidence" value="ECO:0000315"/>
    <property type="project" value="ZFIN"/>
</dbReference>
<dbReference type="GO" id="GO:0031017">
    <property type="term" value="P:exocrine pancreas development"/>
    <property type="evidence" value="ECO:0000316"/>
    <property type="project" value="ZFIN"/>
</dbReference>
<dbReference type="GO" id="GO:0060325">
    <property type="term" value="P:face morphogenesis"/>
    <property type="evidence" value="ECO:0000315"/>
    <property type="project" value="ZFIN"/>
</dbReference>
<dbReference type="GO" id="GO:0031101">
    <property type="term" value="P:fin regeneration"/>
    <property type="evidence" value="ECO:0000315"/>
    <property type="project" value="ZFIN"/>
</dbReference>
<dbReference type="GO" id="GO:0061008">
    <property type="term" value="P:hepaticobiliary system development"/>
    <property type="evidence" value="ECO:0000315"/>
    <property type="project" value="ZFIN"/>
</dbReference>
<dbReference type="GO" id="GO:0042472">
    <property type="term" value="P:inner ear morphogenesis"/>
    <property type="evidence" value="ECO:0000315"/>
    <property type="project" value="ZFIN"/>
</dbReference>
<dbReference type="GO" id="GO:0035622">
    <property type="term" value="P:intrahepatic bile duct development"/>
    <property type="evidence" value="ECO:0000316"/>
    <property type="project" value="ZFIN"/>
</dbReference>
<dbReference type="GO" id="GO:0001889">
    <property type="term" value="P:liver development"/>
    <property type="evidence" value="ECO:0000316"/>
    <property type="project" value="ZFIN"/>
</dbReference>
<dbReference type="GO" id="GO:0007219">
    <property type="term" value="P:Notch signaling pathway"/>
    <property type="evidence" value="ECO:0007669"/>
    <property type="project" value="UniProtKB-KW"/>
</dbReference>
<dbReference type="GO" id="GO:0032474">
    <property type="term" value="P:otolith morphogenesis"/>
    <property type="evidence" value="ECO:0000315"/>
    <property type="project" value="ZFIN"/>
</dbReference>
<dbReference type="GO" id="GO:0031016">
    <property type="term" value="P:pancreas development"/>
    <property type="evidence" value="ECO:0000316"/>
    <property type="project" value="ZFIN"/>
</dbReference>
<dbReference type="GO" id="GO:0060872">
    <property type="term" value="P:semicircular canal development"/>
    <property type="evidence" value="ECO:0000315"/>
    <property type="project" value="ZFIN"/>
</dbReference>
<dbReference type="GO" id="GO:0048752">
    <property type="term" value="P:semicircular canal morphogenesis"/>
    <property type="evidence" value="ECO:0000315"/>
    <property type="project" value="ZFIN"/>
</dbReference>
<dbReference type="GO" id="GO:0030878">
    <property type="term" value="P:thyroid gland development"/>
    <property type="evidence" value="ECO:0000315"/>
    <property type="project" value="ZFIN"/>
</dbReference>
<dbReference type="CDD" id="cd00054">
    <property type="entry name" value="EGF_CA"/>
    <property type="match status" value="13"/>
</dbReference>
<dbReference type="FunFam" id="2.10.25.10:FF:000018">
    <property type="entry name" value="Delta-like 1"/>
    <property type="match status" value="1"/>
</dbReference>
<dbReference type="FunFam" id="2.10.25.10:FF:000007">
    <property type="entry name" value="Delta-like protein"/>
    <property type="match status" value="3"/>
</dbReference>
<dbReference type="FunFam" id="2.10.25.10:FF:000117">
    <property type="entry name" value="Delta-like protein"/>
    <property type="match status" value="1"/>
</dbReference>
<dbReference type="FunFam" id="2.10.25.10:FF:000148">
    <property type="entry name" value="Delta-like protein"/>
    <property type="match status" value="1"/>
</dbReference>
<dbReference type="FunFam" id="2.10.25.10:FF:000181">
    <property type="entry name" value="Delta-like protein"/>
    <property type="match status" value="1"/>
</dbReference>
<dbReference type="FunFam" id="2.10.25.10:FF:000229">
    <property type="entry name" value="Delta-like protein"/>
    <property type="match status" value="1"/>
</dbReference>
<dbReference type="FunFam" id="2.10.25.10:FF:000431">
    <property type="entry name" value="Delta-like protein"/>
    <property type="match status" value="1"/>
</dbReference>
<dbReference type="FunFam" id="2.10.25.10:FF:000613">
    <property type="entry name" value="Delta-like protein"/>
    <property type="match status" value="1"/>
</dbReference>
<dbReference type="FunFam" id="2.10.25.140:FF:000001">
    <property type="entry name" value="Delta-like protein"/>
    <property type="match status" value="1"/>
</dbReference>
<dbReference type="FunFam" id="2.60.40.3510:FF:000001">
    <property type="entry name" value="Delta-like protein"/>
    <property type="match status" value="1"/>
</dbReference>
<dbReference type="FunFam" id="2.10.25.10:FF:000095">
    <property type="entry name" value="Notch, isoform B"/>
    <property type="match status" value="1"/>
</dbReference>
<dbReference type="FunFam" id="2.10.25.10:FF:000143">
    <property type="entry name" value="Protein crumbs 1"/>
    <property type="match status" value="1"/>
</dbReference>
<dbReference type="FunFam" id="2.10.25.10:FF:000122">
    <property type="entry name" value="Protein crumbs homolog 2"/>
    <property type="match status" value="1"/>
</dbReference>
<dbReference type="FunFam" id="2.10.25.10:FF:000146">
    <property type="entry name" value="Putative neurogenic locus notch"/>
    <property type="match status" value="1"/>
</dbReference>
<dbReference type="Gene3D" id="2.10.25.140">
    <property type="match status" value="1"/>
</dbReference>
<dbReference type="Gene3D" id="2.60.40.3510">
    <property type="match status" value="1"/>
</dbReference>
<dbReference type="Gene3D" id="2.10.25.10">
    <property type="entry name" value="Laminin"/>
    <property type="match status" value="15"/>
</dbReference>
<dbReference type="InterPro" id="IPR001774">
    <property type="entry name" value="DSL"/>
</dbReference>
<dbReference type="InterPro" id="IPR001881">
    <property type="entry name" value="EGF-like_Ca-bd_dom"/>
</dbReference>
<dbReference type="InterPro" id="IPR013032">
    <property type="entry name" value="EGF-like_CS"/>
</dbReference>
<dbReference type="InterPro" id="IPR000742">
    <property type="entry name" value="EGF-like_dom"/>
</dbReference>
<dbReference type="InterPro" id="IPR000152">
    <property type="entry name" value="EGF-type_Asp/Asn_hydroxyl_site"/>
</dbReference>
<dbReference type="InterPro" id="IPR018097">
    <property type="entry name" value="EGF_Ca-bd_CS"/>
</dbReference>
<dbReference type="InterPro" id="IPR009030">
    <property type="entry name" value="Growth_fac_rcpt_cys_sf"/>
</dbReference>
<dbReference type="InterPro" id="IPR056986">
    <property type="entry name" value="JAG1_1/2_dom"/>
</dbReference>
<dbReference type="InterPro" id="IPR026219">
    <property type="entry name" value="Jagged/Serrate"/>
</dbReference>
<dbReference type="InterPro" id="IPR011651">
    <property type="entry name" value="Notch_ligand_N"/>
</dbReference>
<dbReference type="InterPro" id="IPR001007">
    <property type="entry name" value="VWF_dom"/>
</dbReference>
<dbReference type="PANTHER" id="PTHR12916">
    <property type="entry name" value="CYTOCHROME C OXIDASE POLYPEPTIDE VIC-2"/>
    <property type="match status" value="1"/>
</dbReference>
<dbReference type="PANTHER" id="PTHR12916:SF12">
    <property type="entry name" value="DELTA-LIKE PROTEIN"/>
    <property type="match status" value="1"/>
</dbReference>
<dbReference type="Pfam" id="PF01414">
    <property type="entry name" value="DSL"/>
    <property type="match status" value="1"/>
</dbReference>
<dbReference type="Pfam" id="PF00008">
    <property type="entry name" value="EGF"/>
    <property type="match status" value="4"/>
</dbReference>
<dbReference type="Pfam" id="PF21700">
    <property type="entry name" value="EGF_DL_JAG"/>
    <property type="match status" value="1"/>
</dbReference>
<dbReference type="Pfam" id="PF25024">
    <property type="entry name" value="EGF_TEN"/>
    <property type="match status" value="1"/>
</dbReference>
<dbReference type="Pfam" id="PF12661">
    <property type="entry name" value="hEGF"/>
    <property type="match status" value="3"/>
</dbReference>
<dbReference type="Pfam" id="PF23575">
    <property type="entry name" value="JAG1"/>
    <property type="match status" value="1"/>
</dbReference>
<dbReference type="Pfam" id="PF07657">
    <property type="entry name" value="MNNL"/>
    <property type="match status" value="1"/>
</dbReference>
<dbReference type="PRINTS" id="PR00010">
    <property type="entry name" value="EGFBLOOD"/>
</dbReference>
<dbReference type="PRINTS" id="PR02059">
    <property type="entry name" value="JAGGEDFAMILY"/>
</dbReference>
<dbReference type="SMART" id="SM00051">
    <property type="entry name" value="DSL"/>
    <property type="match status" value="1"/>
</dbReference>
<dbReference type="SMART" id="SM00181">
    <property type="entry name" value="EGF"/>
    <property type="match status" value="16"/>
</dbReference>
<dbReference type="SMART" id="SM00179">
    <property type="entry name" value="EGF_CA"/>
    <property type="match status" value="14"/>
</dbReference>
<dbReference type="SMART" id="SM00214">
    <property type="entry name" value="VWC"/>
    <property type="match status" value="1"/>
</dbReference>
<dbReference type="SMART" id="SM00215">
    <property type="entry name" value="VWC_out"/>
    <property type="match status" value="1"/>
</dbReference>
<dbReference type="SUPFAM" id="SSF57196">
    <property type="entry name" value="EGF/Laminin"/>
    <property type="match status" value="7"/>
</dbReference>
<dbReference type="SUPFAM" id="SSF57603">
    <property type="entry name" value="FnI-like domain"/>
    <property type="match status" value="1"/>
</dbReference>
<dbReference type="SUPFAM" id="SSF57184">
    <property type="entry name" value="Growth factor receptor domain"/>
    <property type="match status" value="2"/>
</dbReference>
<dbReference type="PROSITE" id="PS00010">
    <property type="entry name" value="ASX_HYDROXYL"/>
    <property type="match status" value="10"/>
</dbReference>
<dbReference type="PROSITE" id="PS51051">
    <property type="entry name" value="DSL"/>
    <property type="match status" value="1"/>
</dbReference>
<dbReference type="PROSITE" id="PS00022">
    <property type="entry name" value="EGF_1"/>
    <property type="match status" value="16"/>
</dbReference>
<dbReference type="PROSITE" id="PS01186">
    <property type="entry name" value="EGF_2"/>
    <property type="match status" value="12"/>
</dbReference>
<dbReference type="PROSITE" id="PS50026">
    <property type="entry name" value="EGF_3"/>
    <property type="match status" value="15"/>
</dbReference>
<dbReference type="PROSITE" id="PS01187">
    <property type="entry name" value="EGF_CA"/>
    <property type="match status" value="8"/>
</dbReference>
<comment type="function">
    <text evidence="1">Ligand for Notch receptors and involved in the mediation of Notch signaling (By similarity). Seems to be involved in cell-fate decisions.</text>
</comment>
<comment type="subcellular location">
    <subcellularLocation>
        <location evidence="7">Membrane</location>
        <topology evidence="7">Single-pass type I membrane protein</topology>
    </subcellularLocation>
    <subcellularLocation>
        <location evidence="2">Cell membrane</location>
    </subcellularLocation>
</comment>
<feature type="signal peptide" evidence="3">
    <location>
        <begin position="1"/>
        <end position="26"/>
    </location>
</feature>
<feature type="chain" id="PRO_0000007631" description="Protein jagged-1b">
    <location>
        <begin position="27"/>
        <end position="1213"/>
    </location>
</feature>
<feature type="topological domain" description="Extracellular" evidence="3">
    <location>
        <begin position="27"/>
        <end position="1064"/>
    </location>
</feature>
<feature type="transmembrane region" description="Helical" evidence="3">
    <location>
        <begin position="1065"/>
        <end position="1087"/>
    </location>
</feature>
<feature type="topological domain" description="Cytoplasmic" evidence="3">
    <location>
        <begin position="1088"/>
        <end position="1213"/>
    </location>
</feature>
<feature type="domain" description="DSL" evidence="5">
    <location>
        <begin position="182"/>
        <end position="226"/>
    </location>
</feature>
<feature type="domain" description="EGF-like 1" evidence="4">
    <location>
        <begin position="227"/>
        <end position="260"/>
    </location>
</feature>
<feature type="domain" description="EGF-like 2; atypical" evidence="4">
    <location>
        <begin position="261"/>
        <end position="291"/>
    </location>
</feature>
<feature type="domain" description="EGF-like 3" evidence="4">
    <location>
        <begin position="293"/>
        <end position="331"/>
    </location>
</feature>
<feature type="domain" description="EGF-like 4" evidence="4">
    <location>
        <begin position="333"/>
        <end position="369"/>
    </location>
</feature>
<feature type="domain" description="EGF-like 5; calcium-binding" evidence="4">
    <location>
        <begin position="371"/>
        <end position="407"/>
    </location>
</feature>
<feature type="domain" description="EGF-like 6; calcium-binding" evidence="4">
    <location>
        <begin position="409"/>
        <end position="445"/>
    </location>
</feature>
<feature type="domain" description="EGF-like 7; calcium-binding" evidence="4">
    <location>
        <begin position="447"/>
        <end position="482"/>
    </location>
</feature>
<feature type="domain" description="EGF-like 8; calcium-binding" evidence="4">
    <location>
        <begin position="484"/>
        <end position="520"/>
    </location>
</feature>
<feature type="domain" description="EGF-like 9" evidence="4">
    <location>
        <begin position="522"/>
        <end position="558"/>
    </location>
</feature>
<feature type="domain" description="EGF-like 10" evidence="4">
    <location>
        <begin position="592"/>
        <end position="624"/>
    </location>
</feature>
<feature type="domain" description="EGF-like 11; calcium-binding" evidence="4">
    <location>
        <begin position="626"/>
        <end position="662"/>
    </location>
</feature>
<feature type="domain" description="EGF-like 12; calcium-binding" evidence="4">
    <location>
        <begin position="664"/>
        <end position="700"/>
    </location>
</feature>
<feature type="domain" description="EGF-like 13" evidence="4">
    <location>
        <begin position="702"/>
        <end position="738"/>
    </location>
</feature>
<feature type="domain" description="EGF-like 14" evidence="4">
    <location>
        <begin position="746"/>
        <end position="777"/>
    </location>
</feature>
<feature type="domain" description="EGF-like 15; calcium-binding" evidence="4">
    <location>
        <begin position="779"/>
        <end position="815"/>
    </location>
</feature>
<feature type="domain" description="EGF-like 16; calcium-binding" evidence="4">
    <location>
        <begin position="817"/>
        <end position="853"/>
    </location>
</feature>
<feature type="domain" description="VWFC">
    <location>
        <begin position="860"/>
        <end position="914"/>
    </location>
</feature>
<feature type="domain" description="EGF-like 17" evidence="4">
    <location>
        <begin position="918"/>
        <end position="956"/>
    </location>
</feature>
<feature type="region of interest" description="Disordered" evidence="6">
    <location>
        <begin position="1181"/>
        <end position="1202"/>
    </location>
</feature>
<feature type="glycosylation site" description="N-linked (GlcNAc...) asparagine" evidence="3">
    <location>
        <position position="139"/>
    </location>
</feature>
<feature type="glycosylation site" description="N-linked (GlcNAc...) asparagine" evidence="3">
    <location>
        <position position="214"/>
    </location>
</feature>
<feature type="glycosylation site" description="N-linked (GlcNAc...) asparagine" evidence="3">
    <location>
        <position position="556"/>
    </location>
</feature>
<feature type="glycosylation site" description="N-linked (GlcNAc...) asparagine" evidence="3">
    <location>
        <position position="742"/>
    </location>
</feature>
<feature type="glycosylation site" description="N-linked (GlcNAc...) asparagine" evidence="3">
    <location>
        <position position="957"/>
    </location>
</feature>
<feature type="glycosylation site" description="N-linked (GlcNAc...) asparagine" evidence="3">
    <location>
        <position position="988"/>
    </location>
</feature>
<feature type="glycosylation site" description="N-linked (GlcNAc...) asparagine" evidence="3">
    <location>
        <position position="1042"/>
    </location>
</feature>
<feature type="disulfide bond" evidence="1">
    <location>
        <begin position="184"/>
        <end position="193"/>
    </location>
</feature>
<feature type="disulfide bond" evidence="1">
    <location>
        <begin position="197"/>
        <end position="209"/>
    </location>
</feature>
<feature type="disulfide bond" evidence="1">
    <location>
        <begin position="217"/>
        <end position="226"/>
    </location>
</feature>
<feature type="disulfide bond" evidence="1">
    <location>
        <begin position="231"/>
        <end position="242"/>
    </location>
</feature>
<feature type="disulfide bond" evidence="1">
    <location>
        <begin position="235"/>
        <end position="248"/>
    </location>
</feature>
<feature type="disulfide bond" evidence="1">
    <location>
        <begin position="250"/>
        <end position="259"/>
    </location>
</feature>
<feature type="disulfide bond" evidence="1">
    <location>
        <begin position="262"/>
        <end position="273"/>
    </location>
</feature>
<feature type="disulfide bond" evidence="1">
    <location>
        <begin position="268"/>
        <end position="279"/>
    </location>
</feature>
<feature type="disulfide bond" evidence="1">
    <location>
        <begin position="281"/>
        <end position="290"/>
    </location>
</feature>
<feature type="disulfide bond" evidence="1">
    <location>
        <begin position="297"/>
        <end position="309"/>
    </location>
</feature>
<feature type="disulfide bond" evidence="1">
    <location>
        <begin position="303"/>
        <end position="319"/>
    </location>
</feature>
<feature type="disulfide bond" evidence="1">
    <location>
        <begin position="321"/>
        <end position="330"/>
    </location>
</feature>
<feature type="disulfide bond" evidence="1">
    <location>
        <begin position="337"/>
        <end position="348"/>
    </location>
</feature>
<feature type="disulfide bond" evidence="1">
    <location>
        <begin position="342"/>
        <end position="357"/>
    </location>
</feature>
<feature type="disulfide bond" evidence="1">
    <location>
        <begin position="359"/>
        <end position="368"/>
    </location>
</feature>
<feature type="disulfide bond" evidence="1">
    <location>
        <begin position="375"/>
        <end position="386"/>
    </location>
</feature>
<feature type="disulfide bond" evidence="1">
    <location>
        <begin position="380"/>
        <end position="395"/>
    </location>
</feature>
<feature type="disulfide bond" evidence="1">
    <location>
        <begin position="397"/>
        <end position="406"/>
    </location>
</feature>
<feature type="disulfide bond" evidence="1">
    <location>
        <begin position="413"/>
        <end position="424"/>
    </location>
</feature>
<feature type="disulfide bond" evidence="1">
    <location>
        <begin position="418"/>
        <end position="433"/>
    </location>
</feature>
<feature type="disulfide bond" evidence="1">
    <location>
        <begin position="435"/>
        <end position="444"/>
    </location>
</feature>
<feature type="disulfide bond" evidence="1">
    <location>
        <begin position="451"/>
        <end position="461"/>
    </location>
</feature>
<feature type="disulfide bond" evidence="1">
    <location>
        <begin position="455"/>
        <end position="470"/>
    </location>
</feature>
<feature type="disulfide bond" evidence="1">
    <location>
        <begin position="472"/>
        <end position="481"/>
    </location>
</feature>
<feature type="disulfide bond" evidence="1">
    <location>
        <begin position="488"/>
        <end position="499"/>
    </location>
</feature>
<feature type="disulfide bond" evidence="1">
    <location>
        <begin position="493"/>
        <end position="508"/>
    </location>
</feature>
<feature type="disulfide bond" evidence="1">
    <location>
        <begin position="510"/>
        <end position="519"/>
    </location>
</feature>
<feature type="disulfide bond" evidence="1">
    <location>
        <begin position="526"/>
        <end position="537"/>
    </location>
</feature>
<feature type="disulfide bond" evidence="1">
    <location>
        <begin position="531"/>
        <end position="546"/>
    </location>
</feature>
<feature type="disulfide bond" evidence="1">
    <location>
        <begin position="548"/>
        <end position="557"/>
    </location>
</feature>
<feature type="disulfide bond" evidence="1">
    <location>
        <begin position="596"/>
        <end position="612"/>
    </location>
</feature>
<feature type="disulfide bond" evidence="1">
    <location>
        <begin position="614"/>
        <end position="623"/>
    </location>
</feature>
<feature type="disulfide bond" evidence="1">
    <location>
        <begin position="630"/>
        <end position="641"/>
    </location>
</feature>
<feature type="disulfide bond" evidence="1">
    <location>
        <begin position="635"/>
        <end position="650"/>
    </location>
</feature>
<feature type="disulfide bond" evidence="1">
    <location>
        <begin position="652"/>
        <end position="661"/>
    </location>
</feature>
<feature type="disulfide bond" evidence="1">
    <location>
        <begin position="668"/>
        <end position="679"/>
    </location>
</feature>
<feature type="disulfide bond" evidence="1">
    <location>
        <begin position="673"/>
        <end position="688"/>
    </location>
</feature>
<feature type="disulfide bond" evidence="1">
    <location>
        <begin position="690"/>
        <end position="699"/>
    </location>
</feature>
<feature type="disulfide bond" evidence="1">
    <location>
        <begin position="706"/>
        <end position="717"/>
    </location>
</feature>
<feature type="disulfide bond" evidence="1">
    <location>
        <begin position="711"/>
        <end position="726"/>
    </location>
</feature>
<feature type="disulfide bond" evidence="1">
    <location>
        <begin position="728"/>
        <end position="737"/>
    </location>
</feature>
<feature type="disulfide bond" evidence="1">
    <location>
        <begin position="745"/>
        <end position="756"/>
    </location>
</feature>
<feature type="disulfide bond" evidence="1">
    <location>
        <begin position="750"/>
        <end position="765"/>
    </location>
</feature>
<feature type="disulfide bond" evidence="1">
    <location>
        <begin position="767"/>
        <end position="776"/>
    </location>
</feature>
<feature type="disulfide bond" evidence="1">
    <location>
        <begin position="783"/>
        <end position="794"/>
    </location>
</feature>
<feature type="disulfide bond" evidence="1">
    <location>
        <begin position="788"/>
        <end position="803"/>
    </location>
</feature>
<feature type="disulfide bond" evidence="1">
    <location>
        <begin position="805"/>
        <end position="814"/>
    </location>
</feature>
<feature type="disulfide bond" evidence="1">
    <location>
        <begin position="821"/>
        <end position="832"/>
    </location>
</feature>
<feature type="disulfide bond" evidence="1">
    <location>
        <begin position="826"/>
        <end position="841"/>
    </location>
</feature>
<feature type="disulfide bond" evidence="1">
    <location>
        <begin position="843"/>
        <end position="852"/>
    </location>
</feature>
<keyword id="KW-0106">Calcium</keyword>
<keyword id="KW-1003">Cell membrane</keyword>
<keyword id="KW-0217">Developmental protein</keyword>
<keyword id="KW-1015">Disulfide bond</keyword>
<keyword id="KW-0245">EGF-like domain</keyword>
<keyword id="KW-0325">Glycoprotein</keyword>
<keyword id="KW-0472">Membrane</keyword>
<keyword id="KW-0914">Notch signaling pathway</keyword>
<keyword id="KW-1185">Reference proteome</keyword>
<keyword id="KW-0677">Repeat</keyword>
<keyword id="KW-0732">Signal</keyword>
<keyword id="KW-0812">Transmembrane</keyword>
<keyword id="KW-1133">Transmembrane helix</keyword>
<evidence type="ECO:0000250" key="1"/>
<evidence type="ECO:0000250" key="2">
    <source>
        <dbReference type="UniProtKB" id="P78504"/>
    </source>
</evidence>
<evidence type="ECO:0000255" key="3"/>
<evidence type="ECO:0000255" key="4">
    <source>
        <dbReference type="PROSITE-ProRule" id="PRU00076"/>
    </source>
</evidence>
<evidence type="ECO:0000255" key="5">
    <source>
        <dbReference type="PROSITE-ProRule" id="PRU00377"/>
    </source>
</evidence>
<evidence type="ECO:0000256" key="6">
    <source>
        <dbReference type="SAM" id="MobiDB-lite"/>
    </source>
</evidence>
<evidence type="ECO:0000305" key="7"/>
<proteinExistence type="evidence at transcript level"/>
<gene>
    <name type="primary">jag1b</name>
    <name type="synonym">jag3</name>
</gene>
<accession>Q90Y54</accession>
<name>JAG1B_DANRE</name>
<reference key="1">
    <citation type="submission" date="2000-01" db="EMBL/GenBank/DDBJ databases">
        <title>Isolation, characterization and expression analysis of zebrafish Jagged genes.</title>
        <authorList>
            <person name="Oda T."/>
            <person name="Chandrasekharappa S.C."/>
        </authorList>
    </citation>
    <scope>NUCLEOTIDE SEQUENCE [MRNA]</scope>
</reference>
<organism>
    <name type="scientific">Danio rerio</name>
    <name type="common">Zebrafish</name>
    <name type="synonym">Brachydanio rerio</name>
    <dbReference type="NCBI Taxonomy" id="7955"/>
    <lineage>
        <taxon>Eukaryota</taxon>
        <taxon>Metazoa</taxon>
        <taxon>Chordata</taxon>
        <taxon>Craniata</taxon>
        <taxon>Vertebrata</taxon>
        <taxon>Euteleostomi</taxon>
        <taxon>Actinopterygii</taxon>
        <taxon>Neopterygii</taxon>
        <taxon>Teleostei</taxon>
        <taxon>Ostariophysi</taxon>
        <taxon>Cypriniformes</taxon>
        <taxon>Danionidae</taxon>
        <taxon>Danioninae</taxon>
        <taxon>Danio</taxon>
    </lineage>
</organism>
<protein>
    <recommendedName>
        <fullName>Protein jagged-1b</fullName>
        <shortName>Jagged1b</shortName>
    </recommendedName>
    <alternativeName>
        <fullName>Jagged3</fullName>
    </alternativeName>
</protein>
<sequence length="1213" mass="133366">MILRRSSVFSAFYLHAFLLCLRTTVSDASGHFELEILSMQNANGELQNGACCDGARNPADRKCTRDECDTYFKVCLKEYQSRVSSAGACSFGTGSTPVLGGNKFSTKGTRSEKSRIVLPFSFAWPRSYTLIVEALDFNNETASESGKLIEKAYHSGMINPNRQWQRLTHNGPVAQFEYQIRVTCLEHYYGFGCNKFCRPRDEFFGHYTCDQNGNKTCLEGWTGPDCNTAICRQGCSTEHGSCKQPGGCKCLYGWQGPYCDKCIPHPGCVHGTCVEPWQCLCDTNWGGQLCDKDLNYCGTHQPCLNGGTCSNTGPDKYQCSCEDGYSGVNCERAEHACLSNPCANGGTCKETSQGYECHCAIGWSGTSCEINVDDCTPNQCKHGGTCQDLVNGFKCACPPHWTGKTCQIDANECEDKPCVNAKSCHNLIGAYFCECLPGWSGQNCDININDCKGQCLNGGTCKDLVNGYRCLCPPGYTGEQCEKDVDECASSPCLNGGRCQDEVNGFQCLCPAGFSGQLCQLDIDYCKPNPCQNGAQCFNLASDYFCKCPDDYEGKNCSHLKDHCRTTSCQVIDSCTVAVASNSTPEGVRYISSNVCGPHGRCRSQAGGQFTCECQEGFRGTYCHENINDCESNPCRNGGTCIDKVNVYQCICADGWEGVHCEINIDDCSLNPCLNKGACQDLVNDFYCECRNGWKGKTCHSRDSQCDEATCNNGGTCHDEGDTFKCRCSPGWEGATCNIAKNSSCLPNPCENGGTCVVNGDSFNCVCKEGWEGSTCTENTNDCNPHPCYNSGTCVDGENWYRCECAPGFAGPDCRININECQSSPCAFGSTCVDEINGYRCLCPPGRIGPDCQEVVGRPCIANGQVTADGAKWEEDCNICQCQNGRIHCTMMWCGPKSCRIGKARGGCPASQSCVPIKEEQCFVKPCPSLGECWPSAPPPPSKCHASFSYQDDSCANITFTFNKENMPQGLSVEHVCNELRHWYLLKNLSTEYAVSISCEPSSSASNEIHISISTEEPRTDRSPIKDITVQIIDLVSKHNGNSTIIKAITGVRVHQIPSPKTDYLVPLLSSIFIVLWIFALASAFLWCIHRRRKQNTHSNTATSATEDNTTNNVREQLNQIKNPIEKHAAHGVPIKDYEGKNSIIAKIRTHNSEVEEEDMDKHLQKARFTKQPAYTLVEREERAPNKNPNWTNKQDNRDLETAQSLNRMEYIV</sequence>